<gene>
    <name evidence="4" type="primary">xptB</name>
    <name type="ORF">AN12402</name>
</gene>
<sequence length="463" mass="52371">MATDGMVLHKRSLSEGGTSTQAWKVLSQTLPSRGPDVDAWWQLTGRHLAVLLDAAAYPIEKQYECLLYHYHYAAPYLGPAPREGASPPTWKSMLQLDGTPFEFSWKWNNPGGEPDVRFGLEPIGPMAGTSLDPLNHLAMREILYKLSSAVPGSDLTWTHHFLATLFDHDYAKYTQKAATMGSSIGTSLVYSLEFQRKSTGLKTYFHPRKLDQQAFLDIPSWEASFRGLHPNSPSRTAVHEFLSTNPEGKLLKPFCLSVDNCSPAKARIKWYFNSPHTNFRAIREIMTLGGRIADTETRTKQFSELFNLLKTVTEEHADFPETSEFPYVPNNGDSIIPNFADAPDMLKGCVYFFDIAPGRNLPAIKVYFPVRNHCRNDLAVTQNLNRWLESRGRGQYGAAFGRALETIADYRRLEDSGGLLSFLSCQFMEDGELDLTSYFNPQAFHSGRLTHRRATRRRGDDRW</sequence>
<organism>
    <name type="scientific">Emericella nidulans (strain FGSC A4 / ATCC 38163 / CBS 112.46 / NRRL 194 / M139)</name>
    <name type="common">Aspergillus nidulans</name>
    <dbReference type="NCBI Taxonomy" id="227321"/>
    <lineage>
        <taxon>Eukaryota</taxon>
        <taxon>Fungi</taxon>
        <taxon>Dikarya</taxon>
        <taxon>Ascomycota</taxon>
        <taxon>Pezizomycotina</taxon>
        <taxon>Eurotiomycetes</taxon>
        <taxon>Eurotiomycetidae</taxon>
        <taxon>Eurotiales</taxon>
        <taxon>Aspergillaceae</taxon>
        <taxon>Aspergillus</taxon>
        <taxon>Aspergillus subgen. Nidulantes</taxon>
    </lineage>
</organism>
<reference key="1">
    <citation type="journal article" date="2005" name="Nature">
        <title>Sequencing of Aspergillus nidulans and comparative analysis with A. fumigatus and A. oryzae.</title>
        <authorList>
            <person name="Galagan J.E."/>
            <person name="Calvo S.E."/>
            <person name="Cuomo C."/>
            <person name="Ma L.-J."/>
            <person name="Wortman J.R."/>
            <person name="Batzoglou S."/>
            <person name="Lee S.-I."/>
            <person name="Bastuerkmen M."/>
            <person name="Spevak C.C."/>
            <person name="Clutterbuck J."/>
            <person name="Kapitonov V."/>
            <person name="Jurka J."/>
            <person name="Scazzocchio C."/>
            <person name="Farman M.L."/>
            <person name="Butler J."/>
            <person name="Purcell S."/>
            <person name="Harris S."/>
            <person name="Braus G.H."/>
            <person name="Draht O."/>
            <person name="Busch S."/>
            <person name="D'Enfert C."/>
            <person name="Bouchier C."/>
            <person name="Goldman G.H."/>
            <person name="Bell-Pedersen D."/>
            <person name="Griffiths-Jones S."/>
            <person name="Doonan J.H."/>
            <person name="Yu J."/>
            <person name="Vienken K."/>
            <person name="Pain A."/>
            <person name="Freitag M."/>
            <person name="Selker E.U."/>
            <person name="Archer D.B."/>
            <person name="Penalva M.A."/>
            <person name="Oakley B.R."/>
            <person name="Momany M."/>
            <person name="Tanaka T."/>
            <person name="Kumagai T."/>
            <person name="Asai K."/>
            <person name="Machida M."/>
            <person name="Nierman W.C."/>
            <person name="Denning D.W."/>
            <person name="Caddick M.X."/>
            <person name="Hynes M."/>
            <person name="Paoletti M."/>
            <person name="Fischer R."/>
            <person name="Miller B.L."/>
            <person name="Dyer P.S."/>
            <person name="Sachs M.S."/>
            <person name="Osmani S.A."/>
            <person name="Birren B.W."/>
        </authorList>
    </citation>
    <scope>NUCLEOTIDE SEQUENCE [LARGE SCALE GENOMIC DNA]</scope>
    <source>
        <strain>FGSC A4 / ATCC 38163 / CBS 112.46 / NRRL 194 / M139</strain>
    </source>
</reference>
<reference key="2">
    <citation type="journal article" date="2009" name="Fungal Genet. Biol.">
        <title>The 2008 update of the Aspergillus nidulans genome annotation: a community effort.</title>
        <authorList>
            <person name="Wortman J.R."/>
            <person name="Gilsenan J.M."/>
            <person name="Joardar V."/>
            <person name="Deegan J."/>
            <person name="Clutterbuck J."/>
            <person name="Andersen M.R."/>
            <person name="Archer D."/>
            <person name="Bencina M."/>
            <person name="Braus G."/>
            <person name="Coutinho P."/>
            <person name="von Dohren H."/>
            <person name="Doonan J."/>
            <person name="Driessen A.J."/>
            <person name="Durek P."/>
            <person name="Espeso E."/>
            <person name="Fekete E."/>
            <person name="Flipphi M."/>
            <person name="Estrada C.G."/>
            <person name="Geysens S."/>
            <person name="Goldman G."/>
            <person name="de Groot P.W."/>
            <person name="Hansen K."/>
            <person name="Harris S.D."/>
            <person name="Heinekamp T."/>
            <person name="Helmstaedt K."/>
            <person name="Henrissat B."/>
            <person name="Hofmann G."/>
            <person name="Homan T."/>
            <person name="Horio T."/>
            <person name="Horiuchi H."/>
            <person name="James S."/>
            <person name="Jones M."/>
            <person name="Karaffa L."/>
            <person name="Karanyi Z."/>
            <person name="Kato M."/>
            <person name="Keller N."/>
            <person name="Kelly D.E."/>
            <person name="Kiel J.A."/>
            <person name="Kim J.M."/>
            <person name="van der Klei I.J."/>
            <person name="Klis F.M."/>
            <person name="Kovalchuk A."/>
            <person name="Krasevec N."/>
            <person name="Kubicek C.P."/>
            <person name="Liu B."/>
            <person name="Maccabe A."/>
            <person name="Meyer V."/>
            <person name="Mirabito P."/>
            <person name="Miskei M."/>
            <person name="Mos M."/>
            <person name="Mullins J."/>
            <person name="Nelson D.R."/>
            <person name="Nielsen J."/>
            <person name="Oakley B.R."/>
            <person name="Osmani S.A."/>
            <person name="Pakula T."/>
            <person name="Paszewski A."/>
            <person name="Paulsen I."/>
            <person name="Pilsyk S."/>
            <person name="Pocsi I."/>
            <person name="Punt P.J."/>
            <person name="Ram A.F."/>
            <person name="Ren Q."/>
            <person name="Robellet X."/>
            <person name="Robson G."/>
            <person name="Seiboth B."/>
            <person name="van Solingen P."/>
            <person name="Specht T."/>
            <person name="Sun J."/>
            <person name="Taheri-Talesh N."/>
            <person name="Takeshita N."/>
            <person name="Ussery D."/>
            <person name="vanKuyk P.A."/>
            <person name="Visser H."/>
            <person name="van de Vondervoort P.J."/>
            <person name="de Vries R.P."/>
            <person name="Walton J."/>
            <person name="Xiang X."/>
            <person name="Xiong Y."/>
            <person name="Zeng A.P."/>
            <person name="Brandt B.W."/>
            <person name="Cornell M.J."/>
            <person name="van den Hondel C.A."/>
            <person name="Visser J."/>
            <person name="Oliver S.G."/>
            <person name="Turner G."/>
        </authorList>
    </citation>
    <scope>GENOME REANNOTATION</scope>
    <source>
        <strain>FGSC A4 / ATCC 38163 / CBS 112.46 / NRRL 194 / M139</strain>
    </source>
</reference>
<reference key="3">
    <citation type="journal article" date="2011" name="J. Am. Chem. Soc.">
        <title>Genome-based deletion analysis reveals the prenyl xanthone biosynthesis pathway in Aspergillus nidulans.</title>
        <authorList>
            <person name="Sanchez J.F."/>
            <person name="Entwistle R."/>
            <person name="Hung J.H."/>
            <person name="Yaegashi J."/>
            <person name="Jain S."/>
            <person name="Chiang Y.M."/>
            <person name="Wang C.C."/>
            <person name="Oakley B.R."/>
        </authorList>
    </citation>
    <scope>FUNCTION</scope>
    <scope>DISRUPTION PHENOTYPE</scope>
</reference>
<reference key="4">
    <citation type="journal article" date="2012" name="ChemBioChem">
        <title>Genetic and biosynthetic studies of the fungal prenylated xanthone shamixanthone and related metabolites in Aspergillus spp. revisited.</title>
        <authorList>
            <person name="Simpson T.J."/>
        </authorList>
    </citation>
    <scope>FUNCTION</scope>
    <scope>PATHWAY</scope>
</reference>
<reference key="5">
    <citation type="journal article" date="2012" name="ChemBioChem">
        <title>New insights into the biosynthesis of prenylated xanthones: Xptb from Aspergillus nidulans catalyses an O-prenylation of xanthones.</title>
        <authorList>
            <person name="Pockrandt D."/>
            <person name="Ludwig L."/>
            <person name="Fan A."/>
            <person name="Koenig G.M."/>
            <person name="Li S.M."/>
        </authorList>
    </citation>
    <scope>FUNCTION</scope>
    <scope>CATALYTIC ACTIVITY</scope>
    <scope>BIOPHYSICOCHEMICAL PROPERTIES</scope>
    <scope>PATHWAY</scope>
</reference>
<accession>P0DP82</accession>
<keyword id="KW-1185">Reference proteome</keyword>
<keyword id="KW-0808">Transferase</keyword>
<comment type="function">
    <text evidence="1 2 3">Dehydrogenase involved in the conversion of monodictyphenone to the prenyl xanthones such as emericellin, shamixanthone and epishamixanthone (PubMed:21351751, PubMed:22730213). Monodictyphenone is first converted to variecoxanthone A via a paeciloxanthone intermediate by the consecutive actions of the FAD-dependent monooxygenase mdpD and the xanthone prenyltransferase xptB (PubMed:21351751). XptB catalyzes regular O-prenylation at the hydroxy group of C-7 of the xanthone ring (PubMed:23150454). Variecoxanthone A is further prenylated to emericellin by xptA before being reduced to shamixanthone and epishamixanthone by the dehydrogenase xptC (PubMed:21351751).</text>
</comment>
<comment type="activity regulation">
    <text evidence="3">Mn(2+) and Co(2+) strongly enhance prenylation activity (PubMed:23150454).</text>
</comment>
<comment type="biophysicochemical properties">
    <kinetics>
        <KM evidence="3">0.327 mM for 1,7-dihydroxy-6-methyl-8-hydroxymethyl-xanthone</KM>
        <KM evidence="3">1.147 mM for 1,7-dihydroxy-6-methylxanthone</KM>
        <KM evidence="3">0.081 mM for 1,7-dihydroxy-6,8-dimethylxanthone</KM>
        <KM evidence="3">0.087 mM for 1,7-dihydroxy-5,6,8-trimethylxanthone</KM>
        <KM evidence="3">0.024 mM for dimethylallyl diphosphate (DMAPP)</KM>
    </kinetics>
</comment>
<comment type="pathway">
    <text evidence="1 3">Secondary metabolite biosynthesis.</text>
</comment>
<comment type="disruption phenotype">
    <text evidence="1">Impairs the production of the xanthones variecoxanthone A, emericellin, shamixanthone and epishamixanthone; and accumulates several upstream metabolites, including emodin, chrysophanol and monodictyphenone (PubMed:21351751).</text>
</comment>
<comment type="similarity">
    <text evidence="5">Belongs to the tryptophan dimethylallyltransferase family.</text>
</comment>
<name>XPTB_EMENI</name>
<protein>
    <recommendedName>
        <fullName evidence="4">Xanthone prenyltransferase B</fullName>
        <ecNumber evidence="3">2.5.1.-</ecNumber>
    </recommendedName>
</protein>
<feature type="chain" id="PRO_0000441130" description="Xanthone prenyltransferase B">
    <location>
        <begin position="1"/>
        <end position="463"/>
    </location>
</feature>
<proteinExistence type="evidence at protein level"/>
<evidence type="ECO:0000269" key="1">
    <source>
    </source>
</evidence>
<evidence type="ECO:0000269" key="2">
    <source>
    </source>
</evidence>
<evidence type="ECO:0000269" key="3">
    <source>
    </source>
</evidence>
<evidence type="ECO:0000303" key="4">
    <source>
    </source>
</evidence>
<evidence type="ECO:0000305" key="5"/>
<dbReference type="EC" id="2.5.1.-" evidence="3"/>
<dbReference type="EMBL" id="BN001302">
    <property type="status" value="NOT_ANNOTATED_CDS"/>
    <property type="molecule type" value="Genomic_DNA"/>
</dbReference>
<dbReference type="EMBL" id="AACD01000137">
    <property type="status" value="NOT_ANNOTATED_CDS"/>
    <property type="molecule type" value="Genomic_DNA"/>
</dbReference>
<dbReference type="SMR" id="P0DP82"/>
<dbReference type="STRING" id="227321.P0DP82"/>
<dbReference type="VEuPathDB" id="FungiDB:AN12402"/>
<dbReference type="InParanoid" id="P0DP82"/>
<dbReference type="Proteomes" id="UP000000560">
    <property type="component" value="Chromosome II"/>
</dbReference>
<dbReference type="GO" id="GO:0004659">
    <property type="term" value="F:prenyltransferase activity"/>
    <property type="evidence" value="ECO:0000318"/>
    <property type="project" value="GO_Central"/>
</dbReference>
<dbReference type="GO" id="GO:0009820">
    <property type="term" value="P:alkaloid metabolic process"/>
    <property type="evidence" value="ECO:0007669"/>
    <property type="project" value="InterPro"/>
</dbReference>
<dbReference type="CDD" id="cd13929">
    <property type="entry name" value="PT-DMATS_CymD"/>
    <property type="match status" value="1"/>
</dbReference>
<dbReference type="InterPro" id="IPR033964">
    <property type="entry name" value="Aro_prenylTrfase"/>
</dbReference>
<dbReference type="InterPro" id="IPR017795">
    <property type="entry name" value="Aro_prenylTrfase_DMATS"/>
</dbReference>
<dbReference type="InterPro" id="IPR012148">
    <property type="entry name" value="DMATS-type_fun"/>
</dbReference>
<dbReference type="NCBIfam" id="TIGR03429">
    <property type="entry name" value="arom_pren_DMATS"/>
    <property type="match status" value="1"/>
</dbReference>
<dbReference type="PANTHER" id="PTHR40627">
    <property type="entry name" value="INDOLE PRENYLTRANSFERASE TDIB-RELATED"/>
    <property type="match status" value="1"/>
</dbReference>
<dbReference type="PANTHER" id="PTHR40627:SF4">
    <property type="entry name" value="PRENYLTRANSFERASE ASQH1-RELATED"/>
    <property type="match status" value="1"/>
</dbReference>
<dbReference type="Pfam" id="PF11991">
    <property type="entry name" value="Trp_DMAT"/>
    <property type="match status" value="1"/>
</dbReference>
<dbReference type="PIRSF" id="PIRSF000509">
    <property type="entry name" value="Trp_DMAT"/>
    <property type="match status" value="1"/>
</dbReference>
<dbReference type="SFLD" id="SFLDS00036">
    <property type="entry name" value="Aromatic_Prenyltransferase"/>
    <property type="match status" value="1"/>
</dbReference>
<dbReference type="SFLD" id="SFLDG01162">
    <property type="entry name" value="I"/>
    <property type="match status" value="1"/>
</dbReference>